<proteinExistence type="inferred from homology"/>
<sequence>MNLIPTVIETTNRGERAYDIYSRLLKDRIIMLGSQIDDNVANSIVSQLLFLQAQDSEKDIYLYINSPGGSVTAGFAIYDTIQHIKPDVQTICIGMAASMGSFLLAAGAKGKRFALPNAEVMIHQPLGGAQGQATEIEIAANHILKTREKLNRILSERTGQSIEKIQKDTDRDNFLTAEEAKEYGLIDEVMVPETK</sequence>
<accession>A5IQX2</accession>
<comment type="function">
    <text evidence="1">Cleaves peptides in various proteins in a process that requires ATP hydrolysis. Has a chymotrypsin-like activity. Plays a major role in the degradation of misfolded proteins.</text>
</comment>
<comment type="catalytic activity">
    <reaction evidence="1">
        <text>Hydrolysis of proteins to small peptides in the presence of ATP and magnesium. alpha-casein is the usual test substrate. In the absence of ATP, only oligopeptides shorter than five residues are hydrolyzed (such as succinyl-Leu-Tyr-|-NHMec, and Leu-Tyr-Leu-|-Tyr-Trp, in which cleavage of the -Tyr-|-Leu- and -Tyr-|-Trp bonds also occurs).</text>
        <dbReference type="EC" id="3.4.21.92"/>
    </reaction>
</comment>
<comment type="subunit">
    <text evidence="1">Fourteen ClpP subunits assemble into 2 heptameric rings which stack back to back to give a disk-like structure with a central cavity, resembling the structure of eukaryotic proteasomes.</text>
</comment>
<comment type="subcellular location">
    <subcellularLocation>
        <location evidence="1">Cytoplasm</location>
    </subcellularLocation>
</comment>
<comment type="similarity">
    <text evidence="1">Belongs to the peptidase S14 family.</text>
</comment>
<organism>
    <name type="scientific">Staphylococcus aureus (strain JH9)</name>
    <dbReference type="NCBI Taxonomy" id="359786"/>
    <lineage>
        <taxon>Bacteria</taxon>
        <taxon>Bacillati</taxon>
        <taxon>Bacillota</taxon>
        <taxon>Bacilli</taxon>
        <taxon>Bacillales</taxon>
        <taxon>Staphylococcaceae</taxon>
        <taxon>Staphylococcus</taxon>
    </lineage>
</organism>
<dbReference type="EC" id="3.4.21.92" evidence="1"/>
<dbReference type="EMBL" id="CP000703">
    <property type="protein sequence ID" value="ABQ48595.1"/>
    <property type="molecule type" value="Genomic_DNA"/>
</dbReference>
<dbReference type="RefSeq" id="WP_001049165.1">
    <property type="nucleotide sequence ID" value="NC_009487.1"/>
</dbReference>
<dbReference type="SMR" id="A5IQX2"/>
<dbReference type="MEROPS" id="S14.001"/>
<dbReference type="GeneID" id="98345115"/>
<dbReference type="KEGG" id="saj:SaurJH9_0793"/>
<dbReference type="HOGENOM" id="CLU_058707_3_2_9"/>
<dbReference type="GO" id="GO:0005737">
    <property type="term" value="C:cytoplasm"/>
    <property type="evidence" value="ECO:0007669"/>
    <property type="project" value="UniProtKB-SubCell"/>
</dbReference>
<dbReference type="GO" id="GO:0009368">
    <property type="term" value="C:endopeptidase Clp complex"/>
    <property type="evidence" value="ECO:0007669"/>
    <property type="project" value="TreeGrafter"/>
</dbReference>
<dbReference type="GO" id="GO:0004176">
    <property type="term" value="F:ATP-dependent peptidase activity"/>
    <property type="evidence" value="ECO:0007669"/>
    <property type="project" value="InterPro"/>
</dbReference>
<dbReference type="GO" id="GO:0051117">
    <property type="term" value="F:ATPase binding"/>
    <property type="evidence" value="ECO:0007669"/>
    <property type="project" value="TreeGrafter"/>
</dbReference>
<dbReference type="GO" id="GO:0004252">
    <property type="term" value="F:serine-type endopeptidase activity"/>
    <property type="evidence" value="ECO:0007669"/>
    <property type="project" value="UniProtKB-UniRule"/>
</dbReference>
<dbReference type="GO" id="GO:0006515">
    <property type="term" value="P:protein quality control for misfolded or incompletely synthesized proteins"/>
    <property type="evidence" value="ECO:0007669"/>
    <property type="project" value="TreeGrafter"/>
</dbReference>
<dbReference type="CDD" id="cd07017">
    <property type="entry name" value="S14_ClpP_2"/>
    <property type="match status" value="1"/>
</dbReference>
<dbReference type="FunFam" id="3.90.226.10:FF:000001">
    <property type="entry name" value="ATP-dependent Clp protease proteolytic subunit"/>
    <property type="match status" value="1"/>
</dbReference>
<dbReference type="Gene3D" id="3.90.226.10">
    <property type="entry name" value="2-enoyl-CoA Hydratase, Chain A, domain 1"/>
    <property type="match status" value="1"/>
</dbReference>
<dbReference type="HAMAP" id="MF_00444">
    <property type="entry name" value="ClpP"/>
    <property type="match status" value="1"/>
</dbReference>
<dbReference type="InterPro" id="IPR001907">
    <property type="entry name" value="ClpP"/>
</dbReference>
<dbReference type="InterPro" id="IPR029045">
    <property type="entry name" value="ClpP/crotonase-like_dom_sf"/>
</dbReference>
<dbReference type="InterPro" id="IPR023562">
    <property type="entry name" value="ClpP/TepA"/>
</dbReference>
<dbReference type="InterPro" id="IPR033135">
    <property type="entry name" value="ClpP_His_AS"/>
</dbReference>
<dbReference type="InterPro" id="IPR018215">
    <property type="entry name" value="ClpP_Ser_AS"/>
</dbReference>
<dbReference type="NCBIfam" id="TIGR00493">
    <property type="entry name" value="clpP"/>
    <property type="match status" value="1"/>
</dbReference>
<dbReference type="NCBIfam" id="NF001368">
    <property type="entry name" value="PRK00277.1"/>
    <property type="match status" value="1"/>
</dbReference>
<dbReference type="NCBIfam" id="NF009205">
    <property type="entry name" value="PRK12553.1"/>
    <property type="match status" value="1"/>
</dbReference>
<dbReference type="PANTHER" id="PTHR10381">
    <property type="entry name" value="ATP-DEPENDENT CLP PROTEASE PROTEOLYTIC SUBUNIT"/>
    <property type="match status" value="1"/>
</dbReference>
<dbReference type="PANTHER" id="PTHR10381:SF70">
    <property type="entry name" value="ATP-DEPENDENT CLP PROTEASE PROTEOLYTIC SUBUNIT"/>
    <property type="match status" value="1"/>
</dbReference>
<dbReference type="Pfam" id="PF00574">
    <property type="entry name" value="CLP_protease"/>
    <property type="match status" value="1"/>
</dbReference>
<dbReference type="PRINTS" id="PR00127">
    <property type="entry name" value="CLPPROTEASEP"/>
</dbReference>
<dbReference type="SUPFAM" id="SSF52096">
    <property type="entry name" value="ClpP/crotonase"/>
    <property type="match status" value="1"/>
</dbReference>
<dbReference type="PROSITE" id="PS00382">
    <property type="entry name" value="CLP_PROTEASE_HIS"/>
    <property type="match status" value="1"/>
</dbReference>
<dbReference type="PROSITE" id="PS00381">
    <property type="entry name" value="CLP_PROTEASE_SER"/>
    <property type="match status" value="1"/>
</dbReference>
<reference key="1">
    <citation type="submission" date="2007-05" db="EMBL/GenBank/DDBJ databases">
        <title>Complete sequence of chromosome of Staphylococcus aureus subsp. aureus JH9.</title>
        <authorList>
            <consortium name="US DOE Joint Genome Institute"/>
            <person name="Copeland A."/>
            <person name="Lucas S."/>
            <person name="Lapidus A."/>
            <person name="Barry K."/>
            <person name="Detter J.C."/>
            <person name="Glavina del Rio T."/>
            <person name="Hammon N."/>
            <person name="Israni S."/>
            <person name="Pitluck S."/>
            <person name="Chain P."/>
            <person name="Malfatti S."/>
            <person name="Shin M."/>
            <person name="Vergez L."/>
            <person name="Schmutz J."/>
            <person name="Larimer F."/>
            <person name="Land M."/>
            <person name="Hauser L."/>
            <person name="Kyrpides N."/>
            <person name="Kim E."/>
            <person name="Tomasz A."/>
            <person name="Richardson P."/>
        </authorList>
    </citation>
    <scope>NUCLEOTIDE SEQUENCE [LARGE SCALE GENOMIC DNA]</scope>
    <source>
        <strain>JH9</strain>
    </source>
</reference>
<gene>
    <name evidence="1" type="primary">clpP</name>
    <name type="ordered locus">SaurJH9_0793</name>
</gene>
<protein>
    <recommendedName>
        <fullName evidence="1">ATP-dependent Clp protease proteolytic subunit</fullName>
        <ecNumber evidence="1">3.4.21.92</ecNumber>
    </recommendedName>
    <alternativeName>
        <fullName evidence="1">Endopeptidase Clp</fullName>
    </alternativeName>
</protein>
<feature type="chain" id="PRO_1000080903" description="ATP-dependent Clp protease proteolytic subunit">
    <location>
        <begin position="1"/>
        <end position="195"/>
    </location>
</feature>
<feature type="active site" description="Nucleophile" evidence="1">
    <location>
        <position position="98"/>
    </location>
</feature>
<feature type="active site" evidence="1">
    <location>
        <position position="123"/>
    </location>
</feature>
<keyword id="KW-0963">Cytoplasm</keyword>
<keyword id="KW-0378">Hydrolase</keyword>
<keyword id="KW-0645">Protease</keyword>
<keyword id="KW-0720">Serine protease</keyword>
<name>CLPP_STAA9</name>
<evidence type="ECO:0000255" key="1">
    <source>
        <dbReference type="HAMAP-Rule" id="MF_00444"/>
    </source>
</evidence>